<sequence length="400" mass="45530">MNDQTRAFLRERFRDYYSRSKVFVPPGLAQREWGFIFHEETVGVAMRRHKAFNSEGELADYLRSMPPAHAYHSAAYYRHPQAPTMQEKDWLGADLIFDLDADHLPGVKNMTYGEMLDNVKVEIIRLIDEFLIDDLGFREKDMDIVFSGGRGYHVHVRDERVRTLKSPERREIVDYLLGTGLEPDRMFIRTNQRIDTGTTSVAGVWLIRGFDSVPGGWDRRVARHIVEKLDQIGRLPDKDAKEALRAFSLESKDVKRILHVARDPASLQKIREKGLIELSGNLEGFFRSILAGTIDQFKVSLAGKTDEPVTADIKRLIRLPGSIHGGSSFRVTPLTRAQLESFNPLEDAIIFSDDPVRVLVTRPAVVEMKGKIYRVSEGVGRLPENVAMFLMCRGSADYEP</sequence>
<feature type="chain" id="PRO_1000045512" description="DNA primase small subunit PriS">
    <location>
        <begin position="1"/>
        <end position="400"/>
    </location>
</feature>
<feature type="active site" evidence="1">
    <location>
        <position position="98"/>
    </location>
</feature>
<feature type="active site" evidence="1">
    <location>
        <position position="100"/>
    </location>
</feature>
<feature type="active site" evidence="1">
    <location>
        <position position="306"/>
    </location>
</feature>
<proteinExistence type="inferred from homology"/>
<evidence type="ECO:0000255" key="1">
    <source>
        <dbReference type="HAMAP-Rule" id="MF_00700"/>
    </source>
</evidence>
<name>PRIS_METAR</name>
<gene>
    <name evidence="1" type="primary">priS</name>
    <name type="synonym">priA</name>
    <name type="ordered locus">UNCMA_29020</name>
    <name type="ORF">LRC299</name>
</gene>
<comment type="function">
    <text evidence="1">Catalytic subunit of DNA primase, an RNA polymerase that catalyzes the synthesis of short RNA molecules used as primers for DNA polymerase during DNA replication. The small subunit contains the primase catalytic core and has DNA synthesis activity on its own. Binding to the large subunit stabilizes and modulates the activity, increasing the rate of DNA synthesis while decreasing the length of the DNA fragments, and conferring RNA synthesis capability. The DNA polymerase activity may enable DNA primase to also catalyze primer extension after primer synthesis. May also play a role in DNA repair.</text>
</comment>
<comment type="cofactor">
    <cofactor evidence="1">
        <name>Mg(2+)</name>
        <dbReference type="ChEBI" id="CHEBI:18420"/>
    </cofactor>
    <cofactor evidence="1">
        <name>Mn(2+)</name>
        <dbReference type="ChEBI" id="CHEBI:29035"/>
    </cofactor>
</comment>
<comment type="subunit">
    <text evidence="1">Heterodimer of a small subunit (PriS) and a large subunit (PriL).</text>
</comment>
<comment type="similarity">
    <text evidence="1">Belongs to the eukaryotic-type primase small subunit family.</text>
</comment>
<accession>Q0W8M0</accession>
<protein>
    <recommendedName>
        <fullName evidence="1">DNA primase small subunit PriS</fullName>
        <ecNumber evidence="1">2.7.7.-</ecNumber>
    </recommendedName>
</protein>
<organism>
    <name type="scientific">Methanocella arvoryzae (strain DSM 22066 / NBRC 105507 / MRE50)</name>
    <dbReference type="NCBI Taxonomy" id="351160"/>
    <lineage>
        <taxon>Archaea</taxon>
        <taxon>Methanobacteriati</taxon>
        <taxon>Methanobacteriota</taxon>
        <taxon>Stenosarchaea group</taxon>
        <taxon>Methanomicrobia</taxon>
        <taxon>Methanocellales</taxon>
        <taxon>Methanocellaceae</taxon>
        <taxon>Methanocella</taxon>
    </lineage>
</organism>
<keyword id="KW-0235">DNA replication</keyword>
<keyword id="KW-0240">DNA-directed RNA polymerase</keyword>
<keyword id="KW-0460">Magnesium</keyword>
<keyword id="KW-0464">Manganese</keyword>
<keyword id="KW-0479">Metal-binding</keyword>
<keyword id="KW-0548">Nucleotidyltransferase</keyword>
<keyword id="KW-0639">Primosome</keyword>
<keyword id="KW-1185">Reference proteome</keyword>
<keyword id="KW-0804">Transcription</keyword>
<keyword id="KW-0808">Transferase</keyword>
<dbReference type="EC" id="2.7.7.-" evidence="1"/>
<dbReference type="EMBL" id="AM114193">
    <property type="protein sequence ID" value="CAJ35273.1"/>
    <property type="molecule type" value="Genomic_DNA"/>
</dbReference>
<dbReference type="RefSeq" id="WP_012037217.1">
    <property type="nucleotide sequence ID" value="NC_009464.1"/>
</dbReference>
<dbReference type="SMR" id="Q0W8M0"/>
<dbReference type="STRING" id="351160.LRC299"/>
<dbReference type="GeneID" id="5143863"/>
<dbReference type="KEGG" id="rci:LRC299"/>
<dbReference type="PATRIC" id="fig|351160.9.peg.2979"/>
<dbReference type="eggNOG" id="arCOG04110">
    <property type="taxonomic scope" value="Archaea"/>
</dbReference>
<dbReference type="OrthoDB" id="31125at2157"/>
<dbReference type="Proteomes" id="UP000000663">
    <property type="component" value="Chromosome"/>
</dbReference>
<dbReference type="GO" id="GO:0000428">
    <property type="term" value="C:DNA-directed RNA polymerase complex"/>
    <property type="evidence" value="ECO:0007669"/>
    <property type="project" value="UniProtKB-KW"/>
</dbReference>
<dbReference type="GO" id="GO:1990077">
    <property type="term" value="C:primosome complex"/>
    <property type="evidence" value="ECO:0007669"/>
    <property type="project" value="UniProtKB-KW"/>
</dbReference>
<dbReference type="GO" id="GO:0003899">
    <property type="term" value="F:DNA-directed RNA polymerase activity"/>
    <property type="evidence" value="ECO:0007669"/>
    <property type="project" value="InterPro"/>
</dbReference>
<dbReference type="GO" id="GO:0046872">
    <property type="term" value="F:metal ion binding"/>
    <property type="evidence" value="ECO:0007669"/>
    <property type="project" value="UniProtKB-KW"/>
</dbReference>
<dbReference type="GO" id="GO:0006269">
    <property type="term" value="P:DNA replication, synthesis of primer"/>
    <property type="evidence" value="ECO:0007669"/>
    <property type="project" value="UniProtKB-UniRule"/>
</dbReference>
<dbReference type="CDD" id="cd04860">
    <property type="entry name" value="AE_Prim_S"/>
    <property type="match status" value="1"/>
</dbReference>
<dbReference type="Gene3D" id="3.90.920.10">
    <property type="entry name" value="DNA primase, PRIM domain"/>
    <property type="match status" value="1"/>
</dbReference>
<dbReference type="HAMAP" id="MF_00700">
    <property type="entry name" value="DNA_primase_sml_arc"/>
    <property type="match status" value="1"/>
</dbReference>
<dbReference type="InterPro" id="IPR002755">
    <property type="entry name" value="DNA_primase_S"/>
</dbReference>
<dbReference type="InterPro" id="IPR014052">
    <property type="entry name" value="DNA_primase_ssu_euk/arc"/>
</dbReference>
<dbReference type="InterPro" id="IPR023639">
    <property type="entry name" value="DNA_primase_ssu_PriS"/>
</dbReference>
<dbReference type="NCBIfam" id="TIGR00335">
    <property type="entry name" value="primase_sml"/>
    <property type="match status" value="1"/>
</dbReference>
<dbReference type="PANTHER" id="PTHR10536">
    <property type="entry name" value="DNA PRIMASE SMALL SUBUNIT"/>
    <property type="match status" value="1"/>
</dbReference>
<dbReference type="Pfam" id="PF01896">
    <property type="entry name" value="DNA_primase_S"/>
    <property type="match status" value="1"/>
</dbReference>
<dbReference type="SUPFAM" id="SSF56747">
    <property type="entry name" value="Prim-pol domain"/>
    <property type="match status" value="1"/>
</dbReference>
<reference key="1">
    <citation type="journal article" date="2006" name="Science">
        <title>Genome of rice cluster I archaea -- the key methane producers in the rice rhizosphere.</title>
        <authorList>
            <person name="Erkel C."/>
            <person name="Kube M."/>
            <person name="Reinhardt R."/>
            <person name="Liesack W."/>
        </authorList>
    </citation>
    <scope>NUCLEOTIDE SEQUENCE [LARGE SCALE GENOMIC DNA]</scope>
    <source>
        <strain>DSM 22066 / NBRC 105507 / MRE50</strain>
    </source>
</reference>